<reference key="1">
    <citation type="journal article" date="1993" name="Plant Mol. Biol.">
        <title>Two putative protein kinases from Arabidopsis thaliana contain highly acidic domains.</title>
        <authorList>
            <person name="Park Y.S."/>
            <person name="Hong S.W."/>
            <person name="Oh S.A."/>
            <person name="Kwak J.M."/>
            <person name="Lee H.H."/>
            <person name="Nam H.G."/>
        </authorList>
    </citation>
    <scope>NUCLEOTIDE SEQUENCE [MRNA]</scope>
    <source>
        <strain>cv. Columbia</strain>
        <tissue>Leaf</tissue>
    </source>
</reference>
<reference key="2">
    <citation type="journal article" date="1997" name="DNA Res.">
        <title>Structural analysis of Arabidopsis thaliana chromosome 5. II. Sequence features of the regions of 1,044,062 bp covered by thirteen physically assigned P1 clones.</title>
        <authorList>
            <person name="Kotani H."/>
            <person name="Nakamura Y."/>
            <person name="Sato S."/>
            <person name="Kaneko T."/>
            <person name="Asamizu E."/>
            <person name="Miyajima N."/>
            <person name="Tabata S."/>
        </authorList>
    </citation>
    <scope>NUCLEOTIDE SEQUENCE [LARGE SCALE GENOMIC DNA]</scope>
    <source>
        <strain>cv. Columbia</strain>
    </source>
</reference>
<reference key="3">
    <citation type="journal article" date="2017" name="Plant J.">
        <title>Araport11: a complete reannotation of the Arabidopsis thaliana reference genome.</title>
        <authorList>
            <person name="Cheng C.Y."/>
            <person name="Krishnakumar V."/>
            <person name="Chan A.P."/>
            <person name="Thibaud-Nissen F."/>
            <person name="Schobel S."/>
            <person name="Town C.D."/>
        </authorList>
    </citation>
    <scope>GENOME REANNOTATION</scope>
    <source>
        <strain>cv. Columbia</strain>
    </source>
</reference>
<reference key="4">
    <citation type="submission" date="2006-03" db="EMBL/GenBank/DDBJ databases">
        <title>Arabidopsis ORF clones.</title>
        <authorList>
            <person name="Shinn P."/>
            <person name="Chen H."/>
            <person name="Kim C.J."/>
            <person name="Ecker J.R."/>
        </authorList>
    </citation>
    <scope>NUCLEOTIDE SEQUENCE [LARGE SCALE MRNA]</scope>
    <source>
        <strain>cv. Columbia</strain>
    </source>
</reference>
<reference key="5">
    <citation type="journal article" date="2008" name="J. Proteome Res.">
        <title>Site-specific phosphorylation profiling of Arabidopsis proteins by mass spectrometry and peptide chip analysis.</title>
        <authorList>
            <person name="de la Fuente van Bentem S."/>
            <person name="Anrather D."/>
            <person name="Dohnal I."/>
            <person name="Roitinger E."/>
            <person name="Csaszar E."/>
            <person name="Joore J."/>
            <person name="Buijnink J."/>
            <person name="Carreri A."/>
            <person name="Forzani C."/>
            <person name="Lorkovic Z.J."/>
            <person name="Barta A."/>
            <person name="Lecourieux D."/>
            <person name="Verhounig A."/>
            <person name="Jonak C."/>
            <person name="Hirt H."/>
        </authorList>
    </citation>
    <scope>PROTEIN SEQUENCE OF 148-174</scope>
    <scope>SUBCELLULAR LOCATION</scope>
    <source>
        <tissue>Root</tissue>
    </source>
</reference>
<reference key="6">
    <citation type="journal article" date="2003" name="Plant Physiol.">
        <title>The Arabidopsis CDPK-SnRK superfamily of protein kinases.</title>
        <authorList>
            <person name="Hrabak E.M."/>
            <person name="Chan C.W.M."/>
            <person name="Gribskov M."/>
            <person name="Harper J.F."/>
            <person name="Choi J.H."/>
            <person name="Halford N."/>
            <person name="Kudla J."/>
            <person name="Luan S."/>
            <person name="Nimmo H.G."/>
            <person name="Sussman M.R."/>
            <person name="Thomas M."/>
            <person name="Walker-Simmons K."/>
            <person name="Zhu J.-K."/>
            <person name="Harmon A.C."/>
        </authorList>
    </citation>
    <scope>GENE FAMILY</scope>
    <scope>NOMENCLATURE</scope>
</reference>
<reference key="7">
    <citation type="journal article" date="2004" name="J. Biol. Chem.">
        <title>Identification of nine sucrose nonfermenting 1-related protein kinases 2 activated by hyperosmotic and saline stresses in Arabidopsis thaliana.</title>
        <authorList>
            <person name="Boudsocq M."/>
            <person name="Barbier-Brygoo H."/>
            <person name="Lauriere C."/>
        </authorList>
    </citation>
    <scope>TISSUE SPECIFICITY</scope>
    <scope>INDUCTION</scope>
</reference>
<reference key="8">
    <citation type="journal article" date="2006" name="J. Biol. Chem.">
        <title>The regulatory domain of SRK2E/OST1/SnRK2.6 interacts with ABI1 and integrates abscisic acid (ABA) and osmotic stress signals controlling stomatal closure in Arabidopsis.</title>
        <authorList>
            <person name="Yoshida R."/>
            <person name="Umezawa T."/>
            <person name="Mizoguchi T."/>
            <person name="Takahashi S."/>
            <person name="Takahashi F."/>
            <person name="Shinozaki K."/>
        </authorList>
    </citation>
    <scope>GENE FAMILY</scope>
    <scope>INDUCTION</scope>
</reference>
<name>SRK2G_ARATH</name>
<proteinExistence type="evidence at protein level"/>
<organism>
    <name type="scientific">Arabidopsis thaliana</name>
    <name type="common">Mouse-ear cress</name>
    <dbReference type="NCBI Taxonomy" id="3702"/>
    <lineage>
        <taxon>Eukaryota</taxon>
        <taxon>Viridiplantae</taxon>
        <taxon>Streptophyta</taxon>
        <taxon>Embryophyta</taxon>
        <taxon>Tracheophyta</taxon>
        <taxon>Spermatophyta</taxon>
        <taxon>Magnoliopsida</taxon>
        <taxon>eudicotyledons</taxon>
        <taxon>Gunneridae</taxon>
        <taxon>Pentapetalae</taxon>
        <taxon>rosids</taxon>
        <taxon>malvids</taxon>
        <taxon>Brassicales</taxon>
        <taxon>Brassicaceae</taxon>
        <taxon>Camelineae</taxon>
        <taxon>Arabidopsis</taxon>
    </lineage>
</organism>
<accession>P43292</accession>
<accession>Q24JK3</accession>
<accession>Q9FNM9</accession>
<comment type="catalytic activity">
    <reaction>
        <text>L-seryl-[protein] + ATP = O-phospho-L-seryl-[protein] + ADP + H(+)</text>
        <dbReference type="Rhea" id="RHEA:17989"/>
        <dbReference type="Rhea" id="RHEA-COMP:9863"/>
        <dbReference type="Rhea" id="RHEA-COMP:11604"/>
        <dbReference type="ChEBI" id="CHEBI:15378"/>
        <dbReference type="ChEBI" id="CHEBI:29999"/>
        <dbReference type="ChEBI" id="CHEBI:30616"/>
        <dbReference type="ChEBI" id="CHEBI:83421"/>
        <dbReference type="ChEBI" id="CHEBI:456216"/>
        <dbReference type="EC" id="2.7.11.1"/>
    </reaction>
</comment>
<comment type="catalytic activity">
    <reaction>
        <text>L-threonyl-[protein] + ATP = O-phospho-L-threonyl-[protein] + ADP + H(+)</text>
        <dbReference type="Rhea" id="RHEA:46608"/>
        <dbReference type="Rhea" id="RHEA-COMP:11060"/>
        <dbReference type="Rhea" id="RHEA-COMP:11605"/>
        <dbReference type="ChEBI" id="CHEBI:15378"/>
        <dbReference type="ChEBI" id="CHEBI:30013"/>
        <dbReference type="ChEBI" id="CHEBI:30616"/>
        <dbReference type="ChEBI" id="CHEBI:61977"/>
        <dbReference type="ChEBI" id="CHEBI:456216"/>
        <dbReference type="EC" id="2.7.11.1"/>
    </reaction>
</comment>
<comment type="interaction">
    <interactant intactId="EBI-401174">
        <id>P43292</id>
    </interactant>
    <interactant intactId="EBI-401228">
        <id>Q9C9W9</id>
        <label>ADO3</label>
    </interactant>
    <organismsDiffer>false</organismsDiffer>
    <experiments>3</experiments>
</comment>
<comment type="subcellular location">
    <subcellularLocation>
        <location evidence="6">Nucleus</location>
    </subcellularLocation>
</comment>
<comment type="tissue specificity">
    <text evidence="4">Expressed in seedlings.</text>
</comment>
<comment type="induction">
    <text evidence="4 5">By abscisic acid (ABA), salt, and osmotic stress.</text>
</comment>
<comment type="similarity">
    <text evidence="1">Belongs to the protein kinase superfamily. Ser/Thr protein kinase family.</text>
</comment>
<feature type="chain" id="PRO_0000085637" description="Serine/threonine-protein kinase SRK2G">
    <location>
        <begin position="1"/>
        <end position="353"/>
    </location>
</feature>
<feature type="domain" description="Protein kinase" evidence="1">
    <location>
        <begin position="4"/>
        <end position="260"/>
    </location>
</feature>
<feature type="region of interest" description="Disordered" evidence="3">
    <location>
        <begin position="299"/>
        <end position="353"/>
    </location>
</feature>
<feature type="compositionally biased region" description="Polar residues" evidence="3">
    <location>
        <begin position="302"/>
        <end position="313"/>
    </location>
</feature>
<feature type="compositionally biased region" description="Acidic residues" evidence="3">
    <location>
        <begin position="315"/>
        <end position="336"/>
    </location>
</feature>
<feature type="compositionally biased region" description="Basic and acidic residues" evidence="3">
    <location>
        <begin position="337"/>
        <end position="353"/>
    </location>
</feature>
<feature type="active site" description="Proton acceptor" evidence="1 2">
    <location>
        <position position="123"/>
    </location>
</feature>
<feature type="binding site" evidence="1">
    <location>
        <begin position="10"/>
        <end position="18"/>
    </location>
    <ligand>
        <name>ATP</name>
        <dbReference type="ChEBI" id="CHEBI:30616"/>
    </ligand>
</feature>
<feature type="binding site" evidence="1">
    <location>
        <position position="33"/>
    </location>
    <ligand>
        <name>ATP</name>
        <dbReference type="ChEBI" id="CHEBI:30616"/>
    </ligand>
</feature>
<feature type="sequence conflict" description="In Ref. 1; CAA78106." evidence="7" ref="1">
    <original>L</original>
    <variation>F</variation>
    <location>
        <position position="55"/>
    </location>
</feature>
<feature type="sequence conflict" description="In Ref. 1; CAA78106." evidence="7" ref="1">
    <original>S</original>
    <variation>A</variation>
    <location>
        <position position="134"/>
    </location>
</feature>
<protein>
    <recommendedName>
        <fullName>Serine/threonine-protein kinase SRK2G</fullName>
        <ecNumber>2.7.11.1</ecNumber>
    </recommendedName>
    <alternativeName>
        <fullName>Arabidopsis protein SK1</fullName>
    </alternativeName>
    <alternativeName>
        <fullName>OST1-kinase-like 8</fullName>
    </alternativeName>
    <alternativeName>
        <fullName>SNF1-related kinase 2.1</fullName>
        <shortName>SnRK2.1</shortName>
    </alternativeName>
</protein>
<keyword id="KW-0067">ATP-binding</keyword>
<keyword id="KW-0903">Direct protein sequencing</keyword>
<keyword id="KW-0418">Kinase</keyword>
<keyword id="KW-0547">Nucleotide-binding</keyword>
<keyword id="KW-0539">Nucleus</keyword>
<keyword id="KW-1185">Reference proteome</keyword>
<keyword id="KW-0723">Serine/threonine-protein kinase</keyword>
<keyword id="KW-0808">Transferase</keyword>
<gene>
    <name type="primary">SRK2G</name>
    <name type="synonym">ASK2</name>
    <name type="synonym">OSKL8</name>
    <name type="synonym">SNRK2.1</name>
    <name type="ordered locus">At5g08590</name>
    <name type="ORF">MAH20.15</name>
</gene>
<evidence type="ECO:0000255" key="1">
    <source>
        <dbReference type="PROSITE-ProRule" id="PRU00159"/>
    </source>
</evidence>
<evidence type="ECO:0000255" key="2">
    <source>
        <dbReference type="PROSITE-ProRule" id="PRU10027"/>
    </source>
</evidence>
<evidence type="ECO:0000256" key="3">
    <source>
        <dbReference type="SAM" id="MobiDB-lite"/>
    </source>
</evidence>
<evidence type="ECO:0000269" key="4">
    <source>
    </source>
</evidence>
<evidence type="ECO:0000269" key="5">
    <source>
    </source>
</evidence>
<evidence type="ECO:0000269" key="6">
    <source>
    </source>
</evidence>
<evidence type="ECO:0000305" key="7"/>
<sequence length="353" mass="40198">MDKYDVVKDLGAGNFGVARLLRHKDTKELVAMKYIERGRKIDENVAREIINHRSLKHPNIIRFKEVILTPTHLAIVMEYASGGELFDRICTAGRFSEAEARYFFQQLICGVDYCHSLQICHRDLKLENTLLDGSPAPLLKICDFGYSKSSILHSRPKSTVGTPAYIAPEVLSRREYDGKHADVWSCGVTLYVMLVGAYPFEDPNDPKNFRKTIQRIMAVQYKIPDYVHISQECKHLLSRIFVTNSAKRITLKEIKNHPWYLKNLPKELLESAQAAYYKRDTSFSLQSVEDIMKIVGEARNPAPSTSAVKSSGSGADEEEEEDVEAEVEEEEDDEDEYEKHVKEAQSCQESDKA</sequence>
<dbReference type="EC" id="2.7.11.1"/>
<dbReference type="EMBL" id="Z12120">
    <property type="protein sequence ID" value="CAA78106.1"/>
    <property type="molecule type" value="mRNA"/>
</dbReference>
<dbReference type="EMBL" id="AB006697">
    <property type="protein sequence ID" value="BAB10008.1"/>
    <property type="molecule type" value="Genomic_DNA"/>
</dbReference>
<dbReference type="EMBL" id="CP002688">
    <property type="protein sequence ID" value="AED91326.1"/>
    <property type="molecule type" value="Genomic_DNA"/>
</dbReference>
<dbReference type="EMBL" id="BT024886">
    <property type="protein sequence ID" value="ABD85157.1"/>
    <property type="molecule type" value="mRNA"/>
</dbReference>
<dbReference type="PIR" id="S24586">
    <property type="entry name" value="S24586"/>
</dbReference>
<dbReference type="RefSeq" id="NP_196476.1">
    <property type="nucleotide sequence ID" value="NM_120946.5"/>
</dbReference>
<dbReference type="SMR" id="P43292"/>
<dbReference type="BioGRID" id="16038">
    <property type="interactions" value="1"/>
</dbReference>
<dbReference type="FunCoup" id="P43292">
    <property type="interactions" value="1684"/>
</dbReference>
<dbReference type="IntAct" id="P43292">
    <property type="interactions" value="3"/>
</dbReference>
<dbReference type="STRING" id="3702.P43292"/>
<dbReference type="iPTMnet" id="P43292"/>
<dbReference type="PaxDb" id="3702-AT5G08590.1"/>
<dbReference type="ProteomicsDB" id="226730"/>
<dbReference type="EnsemblPlants" id="AT5G08590.1">
    <property type="protein sequence ID" value="AT5G08590.1"/>
    <property type="gene ID" value="AT5G08590"/>
</dbReference>
<dbReference type="GeneID" id="830760"/>
<dbReference type="Gramene" id="AT5G08590.1">
    <property type="protein sequence ID" value="AT5G08590.1"/>
    <property type="gene ID" value="AT5G08590"/>
</dbReference>
<dbReference type="KEGG" id="ath:AT5G08590"/>
<dbReference type="Araport" id="AT5G08590"/>
<dbReference type="TAIR" id="AT5G08590">
    <property type="gene designation" value="SNRK2.1"/>
</dbReference>
<dbReference type="eggNOG" id="KOG0583">
    <property type="taxonomic scope" value="Eukaryota"/>
</dbReference>
<dbReference type="HOGENOM" id="CLU_000288_63_0_1"/>
<dbReference type="InParanoid" id="P43292"/>
<dbReference type="OMA" id="FISTECE"/>
<dbReference type="OrthoDB" id="193931at2759"/>
<dbReference type="PhylomeDB" id="P43292"/>
<dbReference type="BRENDA" id="2.7.11.1">
    <property type="organism ID" value="399"/>
</dbReference>
<dbReference type="PRO" id="PR:P43292"/>
<dbReference type="Proteomes" id="UP000006548">
    <property type="component" value="Chromosome 5"/>
</dbReference>
<dbReference type="ExpressionAtlas" id="P43292">
    <property type="expression patterns" value="baseline and differential"/>
</dbReference>
<dbReference type="GO" id="GO:0005634">
    <property type="term" value="C:nucleus"/>
    <property type="evidence" value="ECO:0007669"/>
    <property type="project" value="UniProtKB-SubCell"/>
</dbReference>
<dbReference type="GO" id="GO:0005886">
    <property type="term" value="C:plasma membrane"/>
    <property type="evidence" value="ECO:0007005"/>
    <property type="project" value="TAIR"/>
</dbReference>
<dbReference type="GO" id="GO:0005524">
    <property type="term" value="F:ATP binding"/>
    <property type="evidence" value="ECO:0007669"/>
    <property type="project" value="UniProtKB-KW"/>
</dbReference>
<dbReference type="GO" id="GO:0016301">
    <property type="term" value="F:kinase activity"/>
    <property type="evidence" value="ECO:0000314"/>
    <property type="project" value="TAIR"/>
</dbReference>
<dbReference type="GO" id="GO:0004672">
    <property type="term" value="F:protein kinase activity"/>
    <property type="evidence" value="ECO:0000304"/>
    <property type="project" value="TAIR"/>
</dbReference>
<dbReference type="GO" id="GO:0106310">
    <property type="term" value="F:protein serine kinase activity"/>
    <property type="evidence" value="ECO:0007669"/>
    <property type="project" value="RHEA"/>
</dbReference>
<dbReference type="GO" id="GO:0004674">
    <property type="term" value="F:protein serine/threonine kinase activity"/>
    <property type="evidence" value="ECO:0007669"/>
    <property type="project" value="UniProtKB-KW"/>
</dbReference>
<dbReference type="GO" id="GO:0006468">
    <property type="term" value="P:protein phosphorylation"/>
    <property type="evidence" value="ECO:0000304"/>
    <property type="project" value="TAIR"/>
</dbReference>
<dbReference type="GO" id="GO:0006970">
    <property type="term" value="P:response to osmotic stress"/>
    <property type="evidence" value="ECO:0000314"/>
    <property type="project" value="TAIR"/>
</dbReference>
<dbReference type="GO" id="GO:0009651">
    <property type="term" value="P:response to salt stress"/>
    <property type="evidence" value="ECO:0000314"/>
    <property type="project" value="TAIR"/>
</dbReference>
<dbReference type="CDD" id="cd14662">
    <property type="entry name" value="STKc_SnRK2"/>
    <property type="match status" value="1"/>
</dbReference>
<dbReference type="FunFam" id="1.10.510.10:FF:000132">
    <property type="entry name" value="Serine/threonine-protein kinase SRK2A"/>
    <property type="match status" value="1"/>
</dbReference>
<dbReference type="FunFam" id="3.30.200.20:FF:000045">
    <property type="entry name" value="Serine/threonine-protein kinase SRK2E"/>
    <property type="match status" value="1"/>
</dbReference>
<dbReference type="Gene3D" id="3.30.200.20">
    <property type="entry name" value="Phosphorylase Kinase, domain 1"/>
    <property type="match status" value="1"/>
</dbReference>
<dbReference type="Gene3D" id="1.10.510.10">
    <property type="entry name" value="Transferase(Phosphotransferase) domain 1"/>
    <property type="match status" value="1"/>
</dbReference>
<dbReference type="InterPro" id="IPR011009">
    <property type="entry name" value="Kinase-like_dom_sf"/>
</dbReference>
<dbReference type="InterPro" id="IPR000719">
    <property type="entry name" value="Prot_kinase_dom"/>
</dbReference>
<dbReference type="InterPro" id="IPR017441">
    <property type="entry name" value="Protein_kinase_ATP_BS"/>
</dbReference>
<dbReference type="InterPro" id="IPR008271">
    <property type="entry name" value="Ser/Thr_kinase_AS"/>
</dbReference>
<dbReference type="PANTHER" id="PTHR24343">
    <property type="entry name" value="SERINE/THREONINE KINASE"/>
    <property type="match status" value="1"/>
</dbReference>
<dbReference type="PANTHER" id="PTHR24343:SF490">
    <property type="entry name" value="SERINE_THREONINE-PROTEIN KINASE SRK2G"/>
    <property type="match status" value="1"/>
</dbReference>
<dbReference type="Pfam" id="PF00069">
    <property type="entry name" value="Pkinase"/>
    <property type="match status" value="1"/>
</dbReference>
<dbReference type="SMART" id="SM00220">
    <property type="entry name" value="S_TKc"/>
    <property type="match status" value="1"/>
</dbReference>
<dbReference type="SUPFAM" id="SSF56112">
    <property type="entry name" value="Protein kinase-like (PK-like)"/>
    <property type="match status" value="1"/>
</dbReference>
<dbReference type="PROSITE" id="PS00107">
    <property type="entry name" value="PROTEIN_KINASE_ATP"/>
    <property type="match status" value="1"/>
</dbReference>
<dbReference type="PROSITE" id="PS50011">
    <property type="entry name" value="PROTEIN_KINASE_DOM"/>
    <property type="match status" value="1"/>
</dbReference>
<dbReference type="PROSITE" id="PS00108">
    <property type="entry name" value="PROTEIN_KINASE_ST"/>
    <property type="match status" value="1"/>
</dbReference>